<organism>
    <name type="scientific">Dictyostelium discoideum</name>
    <name type="common">Social amoeba</name>
    <dbReference type="NCBI Taxonomy" id="44689"/>
    <lineage>
        <taxon>Eukaryota</taxon>
        <taxon>Amoebozoa</taxon>
        <taxon>Evosea</taxon>
        <taxon>Eumycetozoa</taxon>
        <taxon>Dictyostelia</taxon>
        <taxon>Dictyosteliales</taxon>
        <taxon>Dictyosteliaceae</taxon>
        <taxon>Dictyostelium</taxon>
    </lineage>
</organism>
<dbReference type="EMBL" id="AAFI02000044">
    <property type="protein sequence ID" value="EAL66445.1"/>
    <property type="molecule type" value="Genomic_DNA"/>
</dbReference>
<dbReference type="RefSeq" id="XP_640434.1">
    <property type="nucleotide sequence ID" value="XM_635342.1"/>
</dbReference>
<dbReference type="SMR" id="Q54T17"/>
<dbReference type="FunCoup" id="Q54T17">
    <property type="interactions" value="64"/>
</dbReference>
<dbReference type="STRING" id="44689.Q54T17"/>
<dbReference type="PaxDb" id="44689-DDB0220093"/>
<dbReference type="EnsemblProtists" id="EAL66445">
    <property type="protein sequence ID" value="EAL66445"/>
    <property type="gene ID" value="DDB_G0282047"/>
</dbReference>
<dbReference type="GeneID" id="8623389"/>
<dbReference type="KEGG" id="ddi:DDB_G0282047"/>
<dbReference type="dictyBase" id="DDB_G0282047">
    <property type="gene designation" value="bzpM"/>
</dbReference>
<dbReference type="VEuPathDB" id="AmoebaDB:DDB_G0282047"/>
<dbReference type="HOGENOM" id="CLU_421769_0_0_1"/>
<dbReference type="InParanoid" id="Q54T17"/>
<dbReference type="PhylomeDB" id="Q54T17"/>
<dbReference type="PRO" id="PR:Q54T17"/>
<dbReference type="Proteomes" id="UP000002195">
    <property type="component" value="Chromosome 3"/>
</dbReference>
<dbReference type="GO" id="GO:0005634">
    <property type="term" value="C:nucleus"/>
    <property type="evidence" value="ECO:0000318"/>
    <property type="project" value="GO_Central"/>
</dbReference>
<dbReference type="GO" id="GO:0003700">
    <property type="term" value="F:DNA-binding transcription factor activity"/>
    <property type="evidence" value="ECO:0007669"/>
    <property type="project" value="InterPro"/>
</dbReference>
<dbReference type="GO" id="GO:0043565">
    <property type="term" value="F:sequence-specific DNA binding"/>
    <property type="evidence" value="ECO:0000318"/>
    <property type="project" value="GO_Central"/>
</dbReference>
<dbReference type="GO" id="GO:0010468">
    <property type="term" value="P:regulation of gene expression"/>
    <property type="evidence" value="ECO:0000318"/>
    <property type="project" value="GO_Central"/>
</dbReference>
<dbReference type="CDD" id="cd14686">
    <property type="entry name" value="bZIP"/>
    <property type="match status" value="1"/>
</dbReference>
<dbReference type="Gene3D" id="1.20.5.170">
    <property type="match status" value="1"/>
</dbReference>
<dbReference type="InterPro" id="IPR004827">
    <property type="entry name" value="bZIP"/>
</dbReference>
<dbReference type="InterPro" id="IPR046347">
    <property type="entry name" value="bZIP_sf"/>
</dbReference>
<dbReference type="PANTHER" id="PTHR14312">
    <property type="entry name" value="CREB/ATF BZIP TRANSCRIPTION FACTOR"/>
    <property type="match status" value="1"/>
</dbReference>
<dbReference type="PANTHER" id="PTHR14312:SF2">
    <property type="entry name" value="GLYCOSYLTRANSFERASE-RELATED"/>
    <property type="match status" value="1"/>
</dbReference>
<dbReference type="Pfam" id="PF07716">
    <property type="entry name" value="bZIP_2"/>
    <property type="match status" value="1"/>
</dbReference>
<dbReference type="SUPFAM" id="SSF57959">
    <property type="entry name" value="Leucine zipper domain"/>
    <property type="match status" value="1"/>
</dbReference>
<reference key="1">
    <citation type="journal article" date="2005" name="Nature">
        <title>The genome of the social amoeba Dictyostelium discoideum.</title>
        <authorList>
            <person name="Eichinger L."/>
            <person name="Pachebat J.A."/>
            <person name="Gloeckner G."/>
            <person name="Rajandream M.A."/>
            <person name="Sucgang R."/>
            <person name="Berriman M."/>
            <person name="Song J."/>
            <person name="Olsen R."/>
            <person name="Szafranski K."/>
            <person name="Xu Q."/>
            <person name="Tunggal B."/>
            <person name="Kummerfeld S."/>
            <person name="Madera M."/>
            <person name="Konfortov B.A."/>
            <person name="Rivero F."/>
            <person name="Bankier A.T."/>
            <person name="Lehmann R."/>
            <person name="Hamlin N."/>
            <person name="Davies R."/>
            <person name="Gaudet P."/>
            <person name="Fey P."/>
            <person name="Pilcher K."/>
            <person name="Chen G."/>
            <person name="Saunders D."/>
            <person name="Sodergren E.J."/>
            <person name="Davis P."/>
            <person name="Kerhornou A."/>
            <person name="Nie X."/>
            <person name="Hall N."/>
            <person name="Anjard C."/>
            <person name="Hemphill L."/>
            <person name="Bason N."/>
            <person name="Farbrother P."/>
            <person name="Desany B."/>
            <person name="Just E."/>
            <person name="Morio T."/>
            <person name="Rost R."/>
            <person name="Churcher C.M."/>
            <person name="Cooper J."/>
            <person name="Haydock S."/>
            <person name="van Driessche N."/>
            <person name="Cronin A."/>
            <person name="Goodhead I."/>
            <person name="Muzny D.M."/>
            <person name="Mourier T."/>
            <person name="Pain A."/>
            <person name="Lu M."/>
            <person name="Harper D."/>
            <person name="Lindsay R."/>
            <person name="Hauser H."/>
            <person name="James K.D."/>
            <person name="Quiles M."/>
            <person name="Madan Babu M."/>
            <person name="Saito T."/>
            <person name="Buchrieser C."/>
            <person name="Wardroper A."/>
            <person name="Felder M."/>
            <person name="Thangavelu M."/>
            <person name="Johnson D."/>
            <person name="Knights A."/>
            <person name="Loulseged H."/>
            <person name="Mungall K.L."/>
            <person name="Oliver K."/>
            <person name="Price C."/>
            <person name="Quail M.A."/>
            <person name="Urushihara H."/>
            <person name="Hernandez J."/>
            <person name="Rabbinowitsch E."/>
            <person name="Steffen D."/>
            <person name="Sanders M."/>
            <person name="Ma J."/>
            <person name="Kohara Y."/>
            <person name="Sharp S."/>
            <person name="Simmonds M.N."/>
            <person name="Spiegler S."/>
            <person name="Tivey A."/>
            <person name="Sugano S."/>
            <person name="White B."/>
            <person name="Walker D."/>
            <person name="Woodward J.R."/>
            <person name="Winckler T."/>
            <person name="Tanaka Y."/>
            <person name="Shaulsky G."/>
            <person name="Schleicher M."/>
            <person name="Weinstock G.M."/>
            <person name="Rosenthal A."/>
            <person name="Cox E.C."/>
            <person name="Chisholm R.L."/>
            <person name="Gibbs R.A."/>
            <person name="Loomis W.F."/>
            <person name="Platzer M."/>
            <person name="Kay R.R."/>
            <person name="Williams J.G."/>
            <person name="Dear P.H."/>
            <person name="Noegel A.A."/>
            <person name="Barrell B.G."/>
            <person name="Kuspa A."/>
        </authorList>
    </citation>
    <scope>NUCLEOTIDE SEQUENCE [LARGE SCALE GENOMIC DNA]</scope>
    <source>
        <strain>AX4</strain>
    </source>
</reference>
<reference key="2">
    <citation type="journal article" date="2006" name="Development">
        <title>bZIP transcription factor interactions regulate DIF responses in Dictyostelium.</title>
        <authorList>
            <person name="Huang E."/>
            <person name="Blagg S.L."/>
            <person name="Keller T."/>
            <person name="Katoh M."/>
            <person name="Shaulsky G."/>
            <person name="Thompson C.R.L."/>
        </authorList>
    </citation>
    <scope>IDENTIFICATION</scope>
</reference>
<proteinExistence type="inferred from homology"/>
<gene>
    <name type="primary">bzpM</name>
    <name type="ORF">DDB_G0282047</name>
</gene>
<evidence type="ECO:0000250" key="1"/>
<evidence type="ECO:0000255" key="2"/>
<evidence type="ECO:0000256" key="3">
    <source>
        <dbReference type="SAM" id="MobiDB-lite"/>
    </source>
</evidence>
<evidence type="ECO:0000305" key="4"/>
<protein>
    <recommendedName>
        <fullName>Probable basic-leucine zipper transcription factor M</fullName>
    </recommendedName>
</protein>
<name>BZPM_DICDI</name>
<sequence length="588" mass="69116">MEESNNNNFLFSPDYIWSQLLENNNNNYNNNYNNINNSINENLLNELNSFQNTGVFDLDTNIEQQQQQQPTEIQQQLQNYQEFQQKKYQERQEQYQIQYQQSYIEPLNFNETYNNETYCNIIPQPPQVEQQQEQEQEQEQQQKQQQQQYIEKQIQEIIKIPEKRQTLNQIPIEMMQHNFFNTPKLDQQLLSNYSDFFKTNPILPTTTTTTTTTAITIDQQQQNHIDNQSLNNSNTKTSKNQQKDNNLPKKKNLSYDITKITFNNNNIEKKRDQTESSKNFREKKKEYVKEIESKILALTLENDKLKKENDSLKTINGSNLMRPEPESINMIMECKKIIKKLEKALIDNDERSLIYLLYHYHSETSKRYSLVEIEVDKIANPYSQIKLKLAGYIQNPTTLDIFDGNFNNNNNNNGNKEEEEEISWFIKYKNEANLTIEQSNKLDLLRNQHGLIFETLLKERKQLDNEILKVFNEIIIASYDGSNANLISDKGFELKSKLKSLKMKIISSLNLNLDTFSSISSILLPKQEALLLVRAHLFGSSKLNPQMDFLNNVWTNIISSNSSCSVFEILNSLKEFSDLENLELNKNS</sequence>
<comment type="function">
    <text evidence="1">Probable transcriptional regulator.</text>
</comment>
<comment type="subcellular location">
    <subcellularLocation>
        <location evidence="1">Nucleus</location>
    </subcellularLocation>
</comment>
<comment type="similarity">
    <text evidence="4">Belongs to the bZIP family.</text>
</comment>
<keyword id="KW-0175">Coiled coil</keyword>
<keyword id="KW-0238">DNA-binding</keyword>
<keyword id="KW-0539">Nucleus</keyword>
<keyword id="KW-1185">Reference proteome</keyword>
<keyword id="KW-0804">Transcription</keyword>
<keyword id="KW-0805">Transcription regulation</keyword>
<accession>Q54T17</accession>
<feature type="chain" id="PRO_0000383604" description="Probable basic-leucine zipper transcription factor M">
    <location>
        <begin position="1"/>
        <end position="588"/>
    </location>
</feature>
<feature type="domain" description="bZIP">
    <location>
        <begin position="263"/>
        <end position="326"/>
    </location>
</feature>
<feature type="region of interest" description="Disordered" evidence="3">
    <location>
        <begin position="221"/>
        <end position="250"/>
    </location>
</feature>
<feature type="region of interest" description="Basic motif" evidence="1">
    <location>
        <begin position="269"/>
        <end position="289"/>
    </location>
</feature>
<feature type="region of interest" description="Leucine-zipper" evidence="1">
    <location>
        <begin position="291"/>
        <end position="312"/>
    </location>
</feature>
<feature type="coiled-coil region" evidence="2">
    <location>
        <begin position="127"/>
        <end position="157"/>
    </location>
</feature>
<feature type="compositionally biased region" description="Low complexity" evidence="3">
    <location>
        <begin position="221"/>
        <end position="240"/>
    </location>
</feature>